<organism>
    <name type="scientific">Corynebacterium glutamicum (strain ATCC 13032 / DSM 20300 / JCM 1318 / BCRC 11384 / CCUG 27702 / LMG 3730 / NBRC 12168 / NCIMB 10025 / NRRL B-2784 / 534)</name>
    <dbReference type="NCBI Taxonomy" id="196627"/>
    <lineage>
        <taxon>Bacteria</taxon>
        <taxon>Bacillati</taxon>
        <taxon>Actinomycetota</taxon>
        <taxon>Actinomycetes</taxon>
        <taxon>Mycobacteriales</taxon>
        <taxon>Corynebacteriaceae</taxon>
        <taxon>Corynebacterium</taxon>
    </lineage>
</organism>
<protein>
    <recommendedName>
        <fullName evidence="7">Betaine/ectoine transporter LcoP</fullName>
    </recommendedName>
    <alternativeName>
        <fullName evidence="6">Low capacity osmoregulated permease</fullName>
    </alternativeName>
</protein>
<dbReference type="EMBL" id="BA000036">
    <property type="protein sequence ID" value="BAB99727.1"/>
    <property type="molecule type" value="Genomic_DNA"/>
</dbReference>
<dbReference type="RefSeq" id="NP_601534.1">
    <property type="nucleotide sequence ID" value="NC_003450.3"/>
</dbReference>
<dbReference type="RefSeq" id="WP_011015047.1">
    <property type="nucleotide sequence ID" value="NC_006958.1"/>
</dbReference>
<dbReference type="SMR" id="Q8NN75"/>
<dbReference type="STRING" id="196627.cg2563"/>
<dbReference type="TCDB" id="2.A.15.1.7">
    <property type="family name" value="the betaine/carnitine/choline transporter (bcct) family"/>
</dbReference>
<dbReference type="KEGG" id="cgb:cg2563"/>
<dbReference type="KEGG" id="cgl:Cgl2334"/>
<dbReference type="PATRIC" id="fig|196627.13.peg.2268"/>
<dbReference type="eggNOG" id="COG1292">
    <property type="taxonomic scope" value="Bacteria"/>
</dbReference>
<dbReference type="HOGENOM" id="CLU_010118_4_0_11"/>
<dbReference type="OrthoDB" id="9775735at2"/>
<dbReference type="BioCyc" id="CORYNE:G18NG-11931-MONOMER"/>
<dbReference type="Proteomes" id="UP000000582">
    <property type="component" value="Chromosome"/>
</dbReference>
<dbReference type="GO" id="GO:0005886">
    <property type="term" value="C:plasma membrane"/>
    <property type="evidence" value="ECO:0007669"/>
    <property type="project" value="UniProtKB-SubCell"/>
</dbReference>
<dbReference type="GO" id="GO:0015293">
    <property type="term" value="F:symporter activity"/>
    <property type="evidence" value="ECO:0007669"/>
    <property type="project" value="UniProtKB-KW"/>
</dbReference>
<dbReference type="GO" id="GO:0006865">
    <property type="term" value="P:amino acid transport"/>
    <property type="evidence" value="ECO:0007669"/>
    <property type="project" value="UniProtKB-KW"/>
</dbReference>
<dbReference type="GO" id="GO:0006814">
    <property type="term" value="P:sodium ion transport"/>
    <property type="evidence" value="ECO:0007669"/>
    <property type="project" value="UniProtKB-KW"/>
</dbReference>
<dbReference type="InterPro" id="IPR000060">
    <property type="entry name" value="BCCT_transptr"/>
</dbReference>
<dbReference type="NCBIfam" id="TIGR00842">
    <property type="entry name" value="bcct"/>
    <property type="match status" value="1"/>
</dbReference>
<dbReference type="PANTHER" id="PTHR30047:SF7">
    <property type="entry name" value="HIGH-AFFINITY CHOLINE TRANSPORT PROTEIN"/>
    <property type="match status" value="1"/>
</dbReference>
<dbReference type="PANTHER" id="PTHR30047">
    <property type="entry name" value="HIGH-AFFINITY CHOLINE TRANSPORT PROTEIN-RELATED"/>
    <property type="match status" value="1"/>
</dbReference>
<dbReference type="Pfam" id="PF02028">
    <property type="entry name" value="BCCT"/>
    <property type="match status" value="1"/>
</dbReference>
<name>LCOP_CORGL</name>
<keyword id="KW-0029">Amino-acid transport</keyword>
<keyword id="KW-1003">Cell membrane</keyword>
<keyword id="KW-0406">Ion transport</keyword>
<keyword id="KW-0472">Membrane</keyword>
<keyword id="KW-1185">Reference proteome</keyword>
<keyword id="KW-0915">Sodium</keyword>
<keyword id="KW-0739">Sodium transport</keyword>
<keyword id="KW-0346">Stress response</keyword>
<keyword id="KW-0769">Symport</keyword>
<keyword id="KW-0812">Transmembrane</keyword>
<keyword id="KW-1133">Transmembrane helix</keyword>
<keyword id="KW-0813">Transport</keyword>
<sequence length="630" mass="68320">MSTNSGNNLPESQESPEEPHYPHDTHPGLVPGISVDAQRNKFGLDKTVFGVTAALILAFIAWGISSPDSVSSVSSTMFSWAMTNTGWLLNFVMLIGIGTMLYIAFSRYGRIKLGTDEDEPEFSRFSWIAMMFGAGIGVGIFFFGPSEPLWHYLSPPPHTVEGSTPESLHQALAQSHFHWGLSAWGLYALVGGALAYSSYRRGRVTLISSTFRSLFGEKTEGIAGRLIDMMAIIATLFGTAATLGLSAIQVGQGVQIISGASEITNNILIAIIAILTIGFIISSVSGVSKGIRYLSNLNISLTLGLVLFVFITGPTLFLLNLIPSSVLEYGSEFLSMAGKSLSWGEETIEFQAGWTAFYWAWWIAWTPFVGMFIARISRGRTLREFALITMAIPSFILILAFTIFGGTAITMNRENVDGFDGSSSKEQVLFDMFSNLPLYSITPFILIFVLAVFFVTSADSASVVMGTMSSQGNPAPNKLIVVFWGLCMMGIAVVMLLTGGESALTGLQNLTILIAIPFALVLIVMAIAFIKDLSTDPAAIRQRYAKAAISNAVVRGLEEHGDDFELSIEPAEEGRGAGATFDSTADHITDWYQRTDEEGNDVDYDFTTGKWADGWTPESTEEGEVDAKKD</sequence>
<evidence type="ECO:0000255" key="1"/>
<evidence type="ECO:0000256" key="2">
    <source>
        <dbReference type="SAM" id="MobiDB-lite"/>
    </source>
</evidence>
<evidence type="ECO:0000269" key="3">
    <source>
    </source>
</evidence>
<evidence type="ECO:0000269" key="4">
    <source>
    </source>
</evidence>
<evidence type="ECO:0000269" key="5">
    <source>
    </source>
</evidence>
<evidence type="ECO:0000303" key="6">
    <source>
    </source>
</evidence>
<evidence type="ECO:0000305" key="7"/>
<evidence type="ECO:0000312" key="8">
    <source>
        <dbReference type="EMBL" id="BAB99727.1"/>
    </source>
</evidence>
<accession>Q8NN75</accession>
<accession>Q6M3B4</accession>
<feature type="chain" id="PRO_0000441732" description="Betaine/ectoine transporter LcoP">
    <location>
        <begin position="1"/>
        <end position="630"/>
    </location>
</feature>
<feature type="transmembrane region" description="Helical" evidence="1">
    <location>
        <begin position="47"/>
        <end position="67"/>
    </location>
</feature>
<feature type="transmembrane region" description="Helical" evidence="1">
    <location>
        <begin position="85"/>
        <end position="105"/>
    </location>
</feature>
<feature type="transmembrane region" description="Helical" evidence="1">
    <location>
        <begin position="125"/>
        <end position="145"/>
    </location>
</feature>
<feature type="transmembrane region" description="Helical" evidence="1">
    <location>
        <begin position="177"/>
        <end position="197"/>
    </location>
</feature>
<feature type="transmembrane region" description="Helical" evidence="1">
    <location>
        <begin position="230"/>
        <end position="250"/>
    </location>
</feature>
<feature type="transmembrane region" description="Helical" evidence="1">
    <location>
        <begin position="267"/>
        <end position="287"/>
    </location>
</feature>
<feature type="transmembrane region" description="Helical" evidence="1">
    <location>
        <begin position="299"/>
        <end position="319"/>
    </location>
</feature>
<feature type="transmembrane region" description="Helical" evidence="1">
    <location>
        <begin position="354"/>
        <end position="374"/>
    </location>
</feature>
<feature type="transmembrane region" description="Helical" evidence="1">
    <location>
        <begin position="385"/>
        <end position="405"/>
    </location>
</feature>
<feature type="transmembrane region" description="Helical" evidence="1">
    <location>
        <begin position="436"/>
        <end position="456"/>
    </location>
</feature>
<feature type="transmembrane region" description="Helical" evidence="1">
    <location>
        <begin position="479"/>
        <end position="499"/>
    </location>
</feature>
<feature type="transmembrane region" description="Helical" evidence="1">
    <location>
        <begin position="510"/>
        <end position="530"/>
    </location>
</feature>
<feature type="region of interest" description="Disordered" evidence="2">
    <location>
        <begin position="1"/>
        <end position="28"/>
    </location>
</feature>
<feature type="region of interest" description="Disordered" evidence="2">
    <location>
        <begin position="611"/>
        <end position="630"/>
    </location>
</feature>
<feature type="compositionally biased region" description="Polar residues" evidence="2">
    <location>
        <begin position="1"/>
        <end position="13"/>
    </location>
</feature>
<feature type="compositionally biased region" description="Basic and acidic residues" evidence="2">
    <location>
        <begin position="17"/>
        <end position="26"/>
    </location>
</feature>
<reference key="1">
    <citation type="journal article" date="2003" name="Appl. Microbiol. Biotechnol.">
        <title>The Corynebacterium glutamicum genome: features and impacts on biotechnological processes.</title>
        <authorList>
            <person name="Ikeda M."/>
            <person name="Nakagawa S."/>
        </authorList>
    </citation>
    <scope>NUCLEOTIDE SEQUENCE [LARGE SCALE GENOMIC DNA]</scope>
    <source>
        <strain>ATCC 13032 / DSM 20300 / JCM 1318 / BCRC 11384 / CCUG 27702 / LMG 3730 / NBRC 12168 / NCIMB 10025 / NRRL B-2784 / 534</strain>
    </source>
</reference>
<reference key="2">
    <citation type="journal article" date="2004" name="FEBS Lett.">
        <title>LcoP, an osmoregulated betaine/ectoine uptake system from Corynebacterium glutamicum.</title>
        <authorList>
            <person name="Steger R."/>
            <person name="Weinand M."/>
            <person name="Kraemer R."/>
            <person name="Morbach S."/>
        </authorList>
    </citation>
    <scope>FUNCTION</scope>
    <scope>ACTIVITY REGULATION</scope>
    <scope>BIOPHYSICOCHEMICAL PROPERTIES</scope>
    <scope>INDUCTION</scope>
    <source>
        <strain>ATCC 13032 / DSM 20300 / JCM 1318 / BCRC 11384 / CCUG 27702 / LMG 3730 / NBRC 12168 / NCIMB 10025 / NRRL B-2784 / 534</strain>
    </source>
</reference>
<reference key="3">
    <citation type="journal article" date="2005" name="J. Bacteriol.">
        <title>Chill activation of compatible solute transporters in Corynebacterium glutamicum at the level of transport activity.</title>
        <authorList>
            <person name="Ozcan N."/>
            <person name="Kraemer R."/>
            <person name="Morbach S."/>
        </authorList>
    </citation>
    <scope>ACTIVITY REGULATION</scope>
    <scope>BIOPHYSICOCHEMICAL PROPERTIES</scope>
    <source>
        <strain>ATCC 13032 / DSM 20300 / JCM 1318 / BCRC 11384 / CCUG 27702 / LMG 3730 / NBRC 12168 / NCIMB 10025 / NRRL B-2784 / 534</strain>
    </source>
</reference>
<reference key="4">
    <citation type="journal article" date="2007" name="Appl. Microbiol. Biotechnol.">
        <title>Characterization of compatible solute transporter multiplicity in Corynebacterium glutamicum.</title>
        <authorList>
            <person name="Weinand M."/>
            <person name="Kraemer R."/>
            <person name="Morbach S."/>
        </authorList>
    </citation>
    <scope>INDUCTION</scope>
    <source>
        <strain>ATCC 13032 / DSM 20300 / JCM 1318 / BCRC 11384 / CCUG 27702 / LMG 3730 / NBRC 12168 / NCIMB 10025 / NRRL B-2784 / 534</strain>
    </source>
</reference>
<proteinExistence type="evidence at protein level"/>
<comment type="function">
    <text evidence="3">Involved in the uptake of osmoprotectants. Can transport betaine and ectoine. Na(+) is probably the coupling ion.</text>
</comment>
<comment type="activity regulation">
    <text evidence="3 4">Uptake is activated by hyperosmotic stress (PubMed:15327991). Shows a small but significant chill stimulation around 15 degrees Celsius (PubMed:15995189).</text>
</comment>
<comment type="biophysicochemical properties">
    <kinetics>
        <KM evidence="3">154 uM for betaine</KM>
        <KM evidence="3">539 uM for ectoine</KM>
        <KM evidence="3">36 mM for Na(+)</KM>
        <Vmax evidence="3">8.5 nmol/min/mg enzyme with betaine as substrate</Vmax>
        <Vmax evidence="3">8.6 nmol/min/mg enzyme with ectoine as substrate</Vmax>
    </kinetics>
    <temperatureDependence>
        <text evidence="4">Optimum temperature is 20 degrees Celsius (at low osmolality).</text>
    </temperatureDependence>
</comment>
<comment type="subcellular location">
    <subcellularLocation>
        <location evidence="7">Cell membrane</location>
        <topology evidence="1">Multi-pass membrane protein</topology>
    </subcellularLocation>
</comment>
<comment type="induction">
    <text evidence="3 5">Expression depends on the external osmolality (PubMed:15327991). Induced upon hyperosmotic conditions, resulting in an increase of its transport activity (PubMed:17390131).</text>
</comment>
<comment type="similarity">
    <text evidence="7">Belongs to the BCCT transporter (TC 2.A.15) family.</text>
</comment>
<gene>
    <name evidence="6" type="primary">lcoP</name>
    <name evidence="8" type="ordered locus">Cgl2334</name>
</gene>